<protein>
    <recommendedName>
        <fullName evidence="1">Large ribosomal subunit protein uL4</fullName>
    </recommendedName>
    <alternativeName>
        <fullName evidence="3">50S ribosomal protein L4</fullName>
    </alternativeName>
</protein>
<comment type="function">
    <text evidence="1">One of the primary rRNA binding proteins, this protein initially binds near the 5'-end of the 23S rRNA. It is important during the early stages of 50S assembly. It makes multiple contacts with different domains of the 23S rRNA in the assembled 50S subunit and ribosome.</text>
</comment>
<comment type="function">
    <text evidence="1">Forms part of the polypeptide exit tunnel.</text>
</comment>
<comment type="subunit">
    <text evidence="1">Part of the 50S ribosomal subunit.</text>
</comment>
<comment type="similarity">
    <text evidence="1">Belongs to the universal ribosomal protein uL4 family.</text>
</comment>
<organism>
    <name type="scientific">Bifidobacterium animalis subsp. lactis (strain AD011)</name>
    <dbReference type="NCBI Taxonomy" id="442563"/>
    <lineage>
        <taxon>Bacteria</taxon>
        <taxon>Bacillati</taxon>
        <taxon>Actinomycetota</taxon>
        <taxon>Actinomycetes</taxon>
        <taxon>Bifidobacteriales</taxon>
        <taxon>Bifidobacteriaceae</taxon>
        <taxon>Bifidobacterium</taxon>
    </lineage>
</organism>
<feature type="chain" id="PRO_1000165987" description="Large ribosomal subunit protein uL4">
    <location>
        <begin position="1"/>
        <end position="218"/>
    </location>
</feature>
<feature type="region of interest" description="Disordered" evidence="2">
    <location>
        <begin position="54"/>
        <end position="106"/>
    </location>
</feature>
<sequence length="218" mass="23446">MANVTLNVTDNNGKEAGTLEAPEALFGFTAEEVQAHVPLIHQVVVAQRAAARQGTHAVKNRGAVSGGGRKPWKQKGTGRARQGSIRAPQWYHGGVAHGPVPRDYSQRTPKKMKAAALRYALSDRANNGRVAVVDFQLDAPSTKKAIAALAPVVADNFTTVVLSRDNVNEWLSVRNIPTVYPIFADQLNTYDVITAQYVVFSKDGLEAFVAAKTAAKEA</sequence>
<proteinExistence type="inferred from homology"/>
<reference key="1">
    <citation type="journal article" date="2009" name="J. Bacteriol.">
        <title>Genome sequence of the probiotic bacterium Bifidobacterium animalis subsp. lactis AD011.</title>
        <authorList>
            <person name="Kim J.F."/>
            <person name="Jeong H."/>
            <person name="Yu D.S."/>
            <person name="Choi S.-H."/>
            <person name="Hur C.-G."/>
            <person name="Park M.-S."/>
            <person name="Yoon S.H."/>
            <person name="Kim D.-W."/>
            <person name="Ji G.E."/>
            <person name="Park H.-S."/>
            <person name="Oh T.K."/>
        </authorList>
    </citation>
    <scope>NUCLEOTIDE SEQUENCE [LARGE SCALE GENOMIC DNA]</scope>
    <source>
        <strain>AD011</strain>
    </source>
</reference>
<accession>B8DW14</accession>
<keyword id="KW-1185">Reference proteome</keyword>
<keyword id="KW-0687">Ribonucleoprotein</keyword>
<keyword id="KW-0689">Ribosomal protein</keyword>
<keyword id="KW-0694">RNA-binding</keyword>
<keyword id="KW-0699">rRNA-binding</keyword>
<name>RL4_BIFA0</name>
<evidence type="ECO:0000255" key="1">
    <source>
        <dbReference type="HAMAP-Rule" id="MF_01328"/>
    </source>
</evidence>
<evidence type="ECO:0000256" key="2">
    <source>
        <dbReference type="SAM" id="MobiDB-lite"/>
    </source>
</evidence>
<evidence type="ECO:0000305" key="3"/>
<gene>
    <name evidence="1" type="primary">rplD</name>
    <name type="ordered locus">BLA_0363</name>
</gene>
<dbReference type="EMBL" id="CP001213">
    <property type="protein sequence ID" value="ACL28665.1"/>
    <property type="molecule type" value="Genomic_DNA"/>
</dbReference>
<dbReference type="RefSeq" id="WP_004268574.1">
    <property type="nucleotide sequence ID" value="NC_011835.1"/>
</dbReference>
<dbReference type="SMR" id="B8DW14"/>
<dbReference type="STRING" id="442563.BLA_0363"/>
<dbReference type="GeneID" id="29695654"/>
<dbReference type="KEGG" id="bla:BLA_0363"/>
<dbReference type="HOGENOM" id="CLU_041575_5_0_11"/>
<dbReference type="Proteomes" id="UP000002456">
    <property type="component" value="Chromosome"/>
</dbReference>
<dbReference type="GO" id="GO:1990904">
    <property type="term" value="C:ribonucleoprotein complex"/>
    <property type="evidence" value="ECO:0007669"/>
    <property type="project" value="UniProtKB-KW"/>
</dbReference>
<dbReference type="GO" id="GO:0005840">
    <property type="term" value="C:ribosome"/>
    <property type="evidence" value="ECO:0007669"/>
    <property type="project" value="UniProtKB-KW"/>
</dbReference>
<dbReference type="GO" id="GO:0019843">
    <property type="term" value="F:rRNA binding"/>
    <property type="evidence" value="ECO:0007669"/>
    <property type="project" value="UniProtKB-UniRule"/>
</dbReference>
<dbReference type="GO" id="GO:0003735">
    <property type="term" value="F:structural constituent of ribosome"/>
    <property type="evidence" value="ECO:0007669"/>
    <property type="project" value="InterPro"/>
</dbReference>
<dbReference type="GO" id="GO:0006412">
    <property type="term" value="P:translation"/>
    <property type="evidence" value="ECO:0007669"/>
    <property type="project" value="UniProtKB-UniRule"/>
</dbReference>
<dbReference type="Gene3D" id="3.40.1370.10">
    <property type="match status" value="1"/>
</dbReference>
<dbReference type="HAMAP" id="MF_01328_B">
    <property type="entry name" value="Ribosomal_uL4_B"/>
    <property type="match status" value="1"/>
</dbReference>
<dbReference type="InterPro" id="IPR002136">
    <property type="entry name" value="Ribosomal_uL4"/>
</dbReference>
<dbReference type="InterPro" id="IPR013005">
    <property type="entry name" value="Ribosomal_uL4-like"/>
</dbReference>
<dbReference type="InterPro" id="IPR023574">
    <property type="entry name" value="Ribosomal_uL4_dom_sf"/>
</dbReference>
<dbReference type="NCBIfam" id="TIGR03953">
    <property type="entry name" value="rplD_bact"/>
    <property type="match status" value="1"/>
</dbReference>
<dbReference type="PANTHER" id="PTHR10746">
    <property type="entry name" value="50S RIBOSOMAL PROTEIN L4"/>
    <property type="match status" value="1"/>
</dbReference>
<dbReference type="PANTHER" id="PTHR10746:SF6">
    <property type="entry name" value="LARGE RIBOSOMAL SUBUNIT PROTEIN UL4M"/>
    <property type="match status" value="1"/>
</dbReference>
<dbReference type="Pfam" id="PF00573">
    <property type="entry name" value="Ribosomal_L4"/>
    <property type="match status" value="1"/>
</dbReference>
<dbReference type="SUPFAM" id="SSF52166">
    <property type="entry name" value="Ribosomal protein L4"/>
    <property type="match status" value="1"/>
</dbReference>